<evidence type="ECO:0000250" key="1">
    <source>
        <dbReference type="UniProtKB" id="P38919"/>
    </source>
</evidence>
<evidence type="ECO:0000250" key="2">
    <source>
        <dbReference type="UniProtKB" id="P60842"/>
    </source>
</evidence>
<evidence type="ECO:0000250" key="3">
    <source>
        <dbReference type="UniProtKB" id="P60843"/>
    </source>
</evidence>
<evidence type="ECO:0000250" key="4">
    <source>
        <dbReference type="UniProtKB" id="Q3B8Q2"/>
    </source>
</evidence>
<evidence type="ECO:0000255" key="5">
    <source>
        <dbReference type="PROSITE-ProRule" id="PRU00541"/>
    </source>
</evidence>
<evidence type="ECO:0000255" key="6">
    <source>
        <dbReference type="PROSITE-ProRule" id="PRU00542"/>
    </source>
</evidence>
<evidence type="ECO:0000305" key="7"/>
<proteinExistence type="evidence at transcript level"/>
<dbReference type="EC" id="3.6.4.13" evidence="1"/>
<dbReference type="EMBL" id="DQ351286">
    <property type="protein sequence ID" value="ABC84196.1"/>
    <property type="molecule type" value="mRNA"/>
</dbReference>
<dbReference type="RefSeq" id="NP_001093663.1">
    <property type="nucleotide sequence ID" value="NM_001100193.1"/>
</dbReference>
<dbReference type="SMR" id="A6M931"/>
<dbReference type="FunCoup" id="A6M931">
    <property type="interactions" value="3635"/>
</dbReference>
<dbReference type="STRING" id="9823.ENSSSCP00000018178"/>
<dbReference type="GlyGen" id="A6M931">
    <property type="glycosylation" value="1 site"/>
</dbReference>
<dbReference type="PaxDb" id="9823-ENSSSCP00000018178"/>
<dbReference type="PeptideAtlas" id="A6M931"/>
<dbReference type="Ensembl" id="ENSSSCT00000018679.5">
    <property type="protein sequence ID" value="ENSSSCP00000018178.5"/>
    <property type="gene ID" value="ENSSSCG00000017155.5"/>
</dbReference>
<dbReference type="Ensembl" id="ENSSSCT00025088657.1">
    <property type="protein sequence ID" value="ENSSSCP00025038742.1"/>
    <property type="gene ID" value="ENSSSCG00025064355.1"/>
</dbReference>
<dbReference type="Ensembl" id="ENSSSCT00035109031.1">
    <property type="protein sequence ID" value="ENSSSCP00035047281.1"/>
    <property type="gene ID" value="ENSSSCG00035079500.1"/>
</dbReference>
<dbReference type="Ensembl" id="ENSSSCT00040076426.1">
    <property type="protein sequence ID" value="ENSSSCP00040032846.1"/>
    <property type="gene ID" value="ENSSSCG00040056176.1"/>
</dbReference>
<dbReference type="Ensembl" id="ENSSSCT00045030594.1">
    <property type="protein sequence ID" value="ENSSSCP00045021200.1"/>
    <property type="gene ID" value="ENSSSCG00045017772.1"/>
</dbReference>
<dbReference type="Ensembl" id="ENSSSCT00050050948.1">
    <property type="protein sequence ID" value="ENSSSCP00050021345.1"/>
    <property type="gene ID" value="ENSSSCG00050037808.1"/>
</dbReference>
<dbReference type="Ensembl" id="ENSSSCT00055038242.1">
    <property type="protein sequence ID" value="ENSSSCP00055030382.1"/>
    <property type="gene ID" value="ENSSSCG00055019309.1"/>
</dbReference>
<dbReference type="Ensembl" id="ENSSSCT00060091354.1">
    <property type="protein sequence ID" value="ENSSSCP00060039507.1"/>
    <property type="gene ID" value="ENSSSCG00060066806.1"/>
</dbReference>
<dbReference type="Ensembl" id="ENSSSCT00065098236.1">
    <property type="protein sequence ID" value="ENSSSCP00065043081.1"/>
    <property type="gene ID" value="ENSSSCG00065071434.1"/>
</dbReference>
<dbReference type="Ensembl" id="ENSSSCT00070033973.1">
    <property type="protein sequence ID" value="ENSSSCP00070028370.1"/>
    <property type="gene ID" value="ENSSSCG00070017212.1"/>
</dbReference>
<dbReference type="Ensembl" id="ENSSSCT00085011307">
    <property type="protein sequence ID" value="ENSSSCP00085008088"/>
    <property type="gene ID" value="ENSSSCG00085006069"/>
</dbReference>
<dbReference type="Ensembl" id="ENSSSCT00115032716">
    <property type="protein sequence ID" value="ENSSSCP00115031084"/>
    <property type="gene ID" value="ENSSSCG00115018469"/>
</dbReference>
<dbReference type="GeneID" id="100101926"/>
<dbReference type="KEGG" id="ssc:100101926"/>
<dbReference type="CTD" id="9775"/>
<dbReference type="VGNC" id="VGNC:87625">
    <property type="gene designation" value="EIF4A3"/>
</dbReference>
<dbReference type="eggNOG" id="KOG0328">
    <property type="taxonomic scope" value="Eukaryota"/>
</dbReference>
<dbReference type="GeneTree" id="ENSGT00940000155037"/>
<dbReference type="InParanoid" id="A6M931"/>
<dbReference type="OMA" id="TRFHDFK"/>
<dbReference type="OrthoDB" id="10265785at2759"/>
<dbReference type="Reactome" id="R-SSC-1169408">
    <property type="pathway name" value="ISG15 antiviral mechanism"/>
</dbReference>
<dbReference type="Reactome" id="R-SSC-159236">
    <property type="pathway name" value="Transport of Mature mRNA derived from an Intron-Containing Transcript"/>
</dbReference>
<dbReference type="Reactome" id="R-SSC-429947">
    <property type="pathway name" value="Deadenylation of mRNA"/>
</dbReference>
<dbReference type="Reactome" id="R-SSC-72163">
    <property type="pathway name" value="mRNA Splicing - Major Pathway"/>
</dbReference>
<dbReference type="Reactome" id="R-SSC-72187">
    <property type="pathway name" value="mRNA 3'-end processing"/>
</dbReference>
<dbReference type="Reactome" id="R-SSC-73856">
    <property type="pathway name" value="RNA Polymerase II Transcription Termination"/>
</dbReference>
<dbReference type="Reactome" id="R-SSC-975957">
    <property type="pathway name" value="Nonsense Mediated Decay (NMD) enhanced by the Exon Junction Complex (EJC)"/>
</dbReference>
<dbReference type="Proteomes" id="UP000008227">
    <property type="component" value="Chromosome 12"/>
</dbReference>
<dbReference type="Proteomes" id="UP000314985">
    <property type="component" value="Chromosome 12"/>
</dbReference>
<dbReference type="Proteomes" id="UP000694570">
    <property type="component" value="Unplaced"/>
</dbReference>
<dbReference type="Proteomes" id="UP000694571">
    <property type="component" value="Unplaced"/>
</dbReference>
<dbReference type="Proteomes" id="UP000694720">
    <property type="component" value="Unplaced"/>
</dbReference>
<dbReference type="Proteomes" id="UP000694722">
    <property type="component" value="Unplaced"/>
</dbReference>
<dbReference type="Proteomes" id="UP000694723">
    <property type="component" value="Unplaced"/>
</dbReference>
<dbReference type="Proteomes" id="UP000694724">
    <property type="component" value="Unplaced"/>
</dbReference>
<dbReference type="Proteomes" id="UP000694725">
    <property type="component" value="Unplaced"/>
</dbReference>
<dbReference type="Proteomes" id="UP000694726">
    <property type="component" value="Unplaced"/>
</dbReference>
<dbReference type="Proteomes" id="UP000694727">
    <property type="component" value="Unplaced"/>
</dbReference>
<dbReference type="Proteomes" id="UP000694728">
    <property type="component" value="Unplaced"/>
</dbReference>
<dbReference type="GO" id="GO:0071013">
    <property type="term" value="C:catalytic step 2 spliceosome"/>
    <property type="evidence" value="ECO:0007669"/>
    <property type="project" value="Ensembl"/>
</dbReference>
<dbReference type="GO" id="GO:0005737">
    <property type="term" value="C:cytoplasm"/>
    <property type="evidence" value="ECO:0007669"/>
    <property type="project" value="UniProtKB-SubCell"/>
</dbReference>
<dbReference type="GO" id="GO:0035145">
    <property type="term" value="C:exon-exon junction complex"/>
    <property type="evidence" value="ECO:0007669"/>
    <property type="project" value="Ensembl"/>
</dbReference>
<dbReference type="GO" id="GO:0016607">
    <property type="term" value="C:nuclear speck"/>
    <property type="evidence" value="ECO:0007669"/>
    <property type="project" value="UniProtKB-SubCell"/>
</dbReference>
<dbReference type="GO" id="GO:0005634">
    <property type="term" value="C:nucleus"/>
    <property type="evidence" value="ECO:0000250"/>
    <property type="project" value="UniProtKB"/>
</dbReference>
<dbReference type="GO" id="GO:0071006">
    <property type="term" value="C:U2-type catalytic step 1 spliceosome"/>
    <property type="evidence" value="ECO:0000250"/>
    <property type="project" value="UniProtKB"/>
</dbReference>
<dbReference type="GO" id="GO:0005524">
    <property type="term" value="F:ATP binding"/>
    <property type="evidence" value="ECO:0007669"/>
    <property type="project" value="UniProtKB-KW"/>
</dbReference>
<dbReference type="GO" id="GO:0016887">
    <property type="term" value="F:ATP hydrolysis activity"/>
    <property type="evidence" value="ECO:0007669"/>
    <property type="project" value="RHEA"/>
</dbReference>
<dbReference type="GO" id="GO:0003729">
    <property type="term" value="F:mRNA binding"/>
    <property type="evidence" value="ECO:0007669"/>
    <property type="project" value="Ensembl"/>
</dbReference>
<dbReference type="GO" id="GO:0008143">
    <property type="term" value="F:poly(A) binding"/>
    <property type="evidence" value="ECO:0007669"/>
    <property type="project" value="Ensembl"/>
</dbReference>
<dbReference type="GO" id="GO:0003724">
    <property type="term" value="F:RNA helicase activity"/>
    <property type="evidence" value="ECO:0007669"/>
    <property type="project" value="UniProtKB-EC"/>
</dbReference>
<dbReference type="GO" id="GO:0048701">
    <property type="term" value="P:embryonic cranial skeleton morphogenesis"/>
    <property type="evidence" value="ECO:0000250"/>
    <property type="project" value="UniProtKB"/>
</dbReference>
<dbReference type="GO" id="GO:0000398">
    <property type="term" value="P:mRNA splicing, via spliceosome"/>
    <property type="evidence" value="ECO:0000250"/>
    <property type="project" value="UniProtKB"/>
</dbReference>
<dbReference type="GO" id="GO:0051028">
    <property type="term" value="P:mRNA transport"/>
    <property type="evidence" value="ECO:0007669"/>
    <property type="project" value="UniProtKB-KW"/>
</dbReference>
<dbReference type="GO" id="GO:0017148">
    <property type="term" value="P:negative regulation of translation"/>
    <property type="evidence" value="ECO:0007669"/>
    <property type="project" value="Ensembl"/>
</dbReference>
<dbReference type="GO" id="GO:0000184">
    <property type="term" value="P:nuclear-transcribed mRNA catabolic process, nonsense-mediated decay"/>
    <property type="evidence" value="ECO:0007669"/>
    <property type="project" value="UniProtKB-KW"/>
</dbReference>
<dbReference type="GO" id="GO:0045727">
    <property type="term" value="P:positive regulation of translation"/>
    <property type="evidence" value="ECO:0007669"/>
    <property type="project" value="Ensembl"/>
</dbReference>
<dbReference type="GO" id="GO:0000381">
    <property type="term" value="P:regulation of alternative mRNA splicing, via spliceosome"/>
    <property type="evidence" value="ECO:0000250"/>
    <property type="project" value="UniProtKB"/>
</dbReference>
<dbReference type="GO" id="GO:2000622">
    <property type="term" value="P:regulation of nuclear-transcribed mRNA catabolic process, nonsense-mediated decay"/>
    <property type="evidence" value="ECO:0007669"/>
    <property type="project" value="Ensembl"/>
</dbReference>
<dbReference type="GO" id="GO:0006364">
    <property type="term" value="P:rRNA processing"/>
    <property type="evidence" value="ECO:0007669"/>
    <property type="project" value="UniProtKB-KW"/>
</dbReference>
<dbReference type="CDD" id="cd18045">
    <property type="entry name" value="DEADc_EIF4AIII_DDX48"/>
    <property type="match status" value="1"/>
</dbReference>
<dbReference type="CDD" id="cd18787">
    <property type="entry name" value="SF2_C_DEAD"/>
    <property type="match status" value="1"/>
</dbReference>
<dbReference type="FunFam" id="3.40.50.300:FF:000031">
    <property type="entry name" value="Eukaryotic initiation factor 4A-III"/>
    <property type="match status" value="1"/>
</dbReference>
<dbReference type="FunFam" id="3.40.50.300:FF:000498">
    <property type="entry name" value="Eukaryotic initiation factor 4A-III"/>
    <property type="match status" value="1"/>
</dbReference>
<dbReference type="Gene3D" id="3.40.50.300">
    <property type="entry name" value="P-loop containing nucleotide triphosphate hydrolases"/>
    <property type="match status" value="2"/>
</dbReference>
<dbReference type="InterPro" id="IPR011545">
    <property type="entry name" value="DEAD/DEAH_box_helicase_dom"/>
</dbReference>
<dbReference type="InterPro" id="IPR014001">
    <property type="entry name" value="Helicase_ATP-bd"/>
</dbReference>
<dbReference type="InterPro" id="IPR001650">
    <property type="entry name" value="Helicase_C-like"/>
</dbReference>
<dbReference type="InterPro" id="IPR027417">
    <property type="entry name" value="P-loop_NTPase"/>
</dbReference>
<dbReference type="InterPro" id="IPR000629">
    <property type="entry name" value="RNA-helicase_DEAD-box_CS"/>
</dbReference>
<dbReference type="InterPro" id="IPR014014">
    <property type="entry name" value="RNA_helicase_DEAD_Q_motif"/>
</dbReference>
<dbReference type="PANTHER" id="PTHR47958">
    <property type="entry name" value="ATP-DEPENDENT RNA HELICASE DBP3"/>
    <property type="match status" value="1"/>
</dbReference>
<dbReference type="Pfam" id="PF00270">
    <property type="entry name" value="DEAD"/>
    <property type="match status" value="1"/>
</dbReference>
<dbReference type="Pfam" id="PF00271">
    <property type="entry name" value="Helicase_C"/>
    <property type="match status" value="1"/>
</dbReference>
<dbReference type="SMART" id="SM00487">
    <property type="entry name" value="DEXDc"/>
    <property type="match status" value="1"/>
</dbReference>
<dbReference type="SMART" id="SM00490">
    <property type="entry name" value="HELICc"/>
    <property type="match status" value="1"/>
</dbReference>
<dbReference type="SUPFAM" id="SSF52540">
    <property type="entry name" value="P-loop containing nucleoside triphosphate hydrolases"/>
    <property type="match status" value="1"/>
</dbReference>
<dbReference type="PROSITE" id="PS00039">
    <property type="entry name" value="DEAD_ATP_HELICASE"/>
    <property type="match status" value="1"/>
</dbReference>
<dbReference type="PROSITE" id="PS51192">
    <property type="entry name" value="HELICASE_ATP_BIND_1"/>
    <property type="match status" value="1"/>
</dbReference>
<dbReference type="PROSITE" id="PS51194">
    <property type="entry name" value="HELICASE_CTER"/>
    <property type="match status" value="1"/>
</dbReference>
<dbReference type="PROSITE" id="PS51195">
    <property type="entry name" value="Q_MOTIF"/>
    <property type="match status" value="1"/>
</dbReference>
<protein>
    <recommendedName>
        <fullName>Eukaryotic initiation factor 4A-III</fullName>
        <shortName>eIF-4A-III</shortName>
        <shortName>eIF4A-III</shortName>
        <ecNumber evidence="1">3.6.4.13</ecNumber>
    </recommendedName>
    <alternativeName>
        <fullName>ATP-dependent RNA helicase DDX48</fullName>
    </alternativeName>
    <alternativeName>
        <fullName>ATP-dependent RNA helicase eIF4A-3</fullName>
    </alternativeName>
    <alternativeName>
        <fullName>DEAD box protein 48</fullName>
    </alternativeName>
    <alternativeName>
        <fullName>Eukaryotic translation initiation factor 4A isoform 3</fullName>
    </alternativeName>
    <component>
        <recommendedName>
            <fullName>Eukaryotic initiation factor 4A-III, N-terminally processed</fullName>
        </recommendedName>
    </component>
</protein>
<accession>A6M931</accession>
<keyword id="KW-0007">Acetylation</keyword>
<keyword id="KW-0067">ATP-binding</keyword>
<keyword id="KW-0963">Cytoplasm</keyword>
<keyword id="KW-0347">Helicase</keyword>
<keyword id="KW-0378">Hydrolase</keyword>
<keyword id="KW-1017">Isopeptide bond</keyword>
<keyword id="KW-0507">mRNA processing</keyword>
<keyword id="KW-0508">mRNA splicing</keyword>
<keyword id="KW-0509">mRNA transport</keyword>
<keyword id="KW-0866">Nonsense-mediated mRNA decay</keyword>
<keyword id="KW-0547">Nucleotide-binding</keyword>
<keyword id="KW-0539">Nucleus</keyword>
<keyword id="KW-0597">Phosphoprotein</keyword>
<keyword id="KW-1185">Reference proteome</keyword>
<keyword id="KW-0694">RNA-binding</keyword>
<keyword id="KW-0698">rRNA processing</keyword>
<keyword id="KW-0747">Spliceosome</keyword>
<keyword id="KW-0810">Translation regulation</keyword>
<keyword id="KW-0813">Transport</keyword>
<keyword id="KW-0832">Ubl conjugation</keyword>
<comment type="function">
    <text evidence="1">ATP-dependent RNA helicase. Involved in pre-mRNA splicing as component of the spliceosome. Core component of the splicing-dependent multiprotein exon junction complex (EJC) deposited at splice junctions on mRNAs. The EJC is a dynamic structure consisting of core proteins and several peripheral nuclear and cytoplasmic associated factors that join the complex only transiently either during EJC assembly or during subsequent mRNA metabolism. The EJC marks the position of the exon-exon junction in the mature mRNA for the gene expression machinery and the core components remain bound to spliced mRNAs throughout all stages of mRNA metabolism thereby influencing downstream processes including nuclear mRNA export, subcellular mRNA localization, translation efficiency and nonsense-mediated mRNA decay (NMD). Its RNA-dependent ATPase and RNA-helicase activities are induced by CASC3, but abolished in presence of the MAGOH-RBM8A heterodimer, thereby trapping the ATP-bound EJC core onto spliced mRNA in a stable conformation. The inhibition of ATPase activity by the MAGOH-RBM8A heterodimer increases the RNA-binding affinity of the EJC. Involved in translational enhancement of spliced mRNAs after formation of the 80S ribosome complex. Binds spliced mRNA in sequence-independent manner, 20-24 nucleotides upstream of mRNA exon-exon junctions. Shows higher affinity for single-stranded RNA in an ATP-bound core EJC complex than after the ATP is hydrolyzed. Involved in the splicing modulation of BCL2L1/Bcl-X (and probably other apoptotic genes); specifically inhibits formation of proapoptotic isoforms; the function is different from the established EJC assembly. Involved in craniofacial development.</text>
</comment>
<comment type="catalytic activity">
    <reaction evidence="1">
        <text>ATP + H2O = ADP + phosphate + H(+)</text>
        <dbReference type="Rhea" id="RHEA:13065"/>
        <dbReference type="ChEBI" id="CHEBI:15377"/>
        <dbReference type="ChEBI" id="CHEBI:15378"/>
        <dbReference type="ChEBI" id="CHEBI:30616"/>
        <dbReference type="ChEBI" id="CHEBI:43474"/>
        <dbReference type="ChEBI" id="CHEBI:456216"/>
        <dbReference type="EC" id="3.6.4.13"/>
    </reaction>
</comment>
<comment type="activity regulation">
    <text evidence="1">The ATPase activity is increased some 4-fold in the presence of RNA.</text>
</comment>
<comment type="subunit">
    <text evidence="1">Identified in the spliceosome C complex. Core component of the mRNA splicing-dependent exon junction complex (EJC); the core complex contains CASC3, EIF4A3, MAGOH or MAGOHB, and RBM8A. Interacts with CASC3, MAGOH, NXF1, RBM8A and ALYREF/THOC4. Component of the ALYREF/THOC4-EJC-RNA complex; in the complex interacts with MAGOH, RBM8A and THOC4 (via the WXHD motif); these interactions are likely specific to RNA-bound EJC (By similarity). May interact with NOM1. Interacts with POLDIP3. Interacts with CWC22 and PRPF19 in an RNA-independent manner. Direct interaction with CWC22 is mediated by the helicase C-terminal domain. Full interaction with CWC22 occurs only when EIF4A3 is not part of the EJC and prevents EIF4A3 binding to RNA. Identified in a complex composed of the EJC core, UPF3B and UPF2. The EJC core can also interact with UPF3A (in vitro). Interacts with NCBP3 (By similarity). Interacts with NRDE2 (By similarity). Interacts with DHX34; the interaction is RNA-independent (By similarity).</text>
</comment>
<comment type="subcellular location">
    <subcellularLocation>
        <location evidence="4">Nucleus</location>
    </subcellularLocation>
    <subcellularLocation>
        <location evidence="1">Nucleus speckle</location>
    </subcellularLocation>
    <subcellularLocation>
        <location evidence="4">Cytoplasm</location>
    </subcellularLocation>
    <text evidence="4">Nucleocytoplasmic shuttling protein. Travels to the cytoplasm as part of the exon junction complex (EJC) bound to mRNA. Detected in dendritic layer as well as the nuclear and cytoplasmic (somatic) compartments of neurons. Colocalizes with STAU1 and FMR1 in dendrites.</text>
</comment>
<comment type="similarity">
    <text evidence="7">Belongs to the DEAD box helicase family. eIF4A subfamily.</text>
</comment>
<name>IF4A3_PIG</name>
<feature type="chain" id="PRO_0000423270" description="Eukaryotic initiation factor 4A-III">
    <location>
        <begin position="1"/>
        <end position="411"/>
    </location>
</feature>
<feature type="initiator methionine" description="Removed; alternate" evidence="1">
    <location>
        <position position="1"/>
    </location>
</feature>
<feature type="chain" id="PRO_0000379477" description="Eukaryotic initiation factor 4A-III, N-terminally processed">
    <location>
        <begin position="2"/>
        <end position="411"/>
    </location>
</feature>
<feature type="domain" description="Helicase ATP-binding" evidence="5">
    <location>
        <begin position="69"/>
        <end position="239"/>
    </location>
</feature>
<feature type="domain" description="Helicase C-terminal" evidence="6">
    <location>
        <begin position="250"/>
        <end position="411"/>
    </location>
</feature>
<feature type="short sequence motif" description="Q motif">
    <location>
        <begin position="38"/>
        <end position="66"/>
    </location>
</feature>
<feature type="short sequence motif" description="DEAD box" evidence="7">
    <location>
        <begin position="187"/>
        <end position="190"/>
    </location>
</feature>
<feature type="binding site" evidence="1">
    <location>
        <position position="60"/>
    </location>
    <ligand>
        <name>ATP</name>
        <dbReference type="ChEBI" id="CHEBI:30616"/>
    </ligand>
</feature>
<feature type="binding site" evidence="1">
    <location>
        <position position="65"/>
    </location>
    <ligand>
        <name>ATP</name>
        <dbReference type="ChEBI" id="CHEBI:30616"/>
    </ligand>
</feature>
<feature type="binding site" evidence="5">
    <location>
        <begin position="85"/>
        <end position="90"/>
    </location>
    <ligand>
        <name>ATP</name>
        <dbReference type="ChEBI" id="CHEBI:30616"/>
    </ligand>
</feature>
<feature type="binding site" evidence="1">
    <location>
        <position position="342"/>
    </location>
    <ligand>
        <name>ATP</name>
        <dbReference type="ChEBI" id="CHEBI:30616"/>
    </ligand>
</feature>
<feature type="binding site" evidence="5">
    <location>
        <begin position="367"/>
        <end position="371"/>
    </location>
    <ligand>
        <name>ATP</name>
        <dbReference type="ChEBI" id="CHEBI:30616"/>
    </ligand>
</feature>
<feature type="modified residue" description="N-acetylmethionine" evidence="1">
    <location>
        <position position="1"/>
    </location>
</feature>
<feature type="modified residue" description="N-acetylalanine; in Eukaryotic initiation factor 4A-III, N-terminally processed" evidence="1">
    <location>
        <position position="2"/>
    </location>
</feature>
<feature type="modified residue" description="Phosphoserine" evidence="2">
    <location>
        <position position="10"/>
    </location>
</feature>
<feature type="modified residue" description="Phosphoserine" evidence="1">
    <location>
        <position position="12"/>
    </location>
</feature>
<feature type="modified residue" description="N6-acetyllysine" evidence="2">
    <location>
        <position position="124"/>
    </location>
</feature>
<feature type="modified residue" description="Phosphothreonine" evidence="1">
    <location>
        <position position="163"/>
    </location>
</feature>
<feature type="modified residue" description="N6-acetyllysine" evidence="3">
    <location>
        <position position="198"/>
    </location>
</feature>
<feature type="modified residue" description="N6-acetyllysine" evidence="1">
    <location>
        <position position="296"/>
    </location>
</feature>
<feature type="modified residue" description="N6-acetyllysine" evidence="1">
    <location>
        <position position="321"/>
    </location>
</feature>
<feature type="cross-link" description="Glycyl lysine isopeptide (Lys-Gly) (interchain with G-Cter in SUMO2)" evidence="1">
    <location>
        <position position="19"/>
    </location>
</feature>
<feature type="cross-link" description="Glycyl lysine isopeptide (Lys-Gly) (interchain with G-Cter in SUMO2)" evidence="2">
    <location>
        <position position="152"/>
    </location>
</feature>
<feature type="cross-link" description="Glycyl lysine isopeptide (Lys-Gly) (interchain with G-Cter in SUMO2)" evidence="1">
    <location>
        <position position="314"/>
    </location>
</feature>
<feature type="cross-link" description="Glycyl lysine isopeptide (Lys-Gly) (interchain with G-Cter in SUMO2)" evidence="2">
    <location>
        <position position="374"/>
    </location>
</feature>
<feature type="cross-link" description="Glycyl lysine isopeptide (Lys-Gly) (interchain with G-Cter in SUMO2)" evidence="1">
    <location>
        <position position="382"/>
    </location>
</feature>
<sequence length="411" mass="46841">MAATATMATSGSARKRLLKEEDMTKVEFETSEEVDVTPTFDTMGLREDLLRGIYAYGFEKPSAIQQRAIKQIIKGRDVIAQSQSGTGKTATFSISVLQCLDIQVRETQALILAPTRELAVQIQKGLLALGDYMNVQCHACIGGTNVGEDIRKLDYGQHVVAGTPGRVFDMIRRRSLRTRAIKMLVLDEADEMLNKGFKEQIYDVYRYLPPATQVVLISATLPHEILEMTNKFMTDPIRILVKRDELTLEGIKQFFVAVEREEWKFDTLCDLYDTLTITQAVIFCNTKRKVDWLTEKMREANFTVSSMHGDMPQKERESIMKEFRSGASRVLISTDVWARGLDVPQVSLIINYDLPNNRELYIHRIGRSGRYGRKGVAINFVKNDDIRILRDIEQYYSTQIDEMPMNVADLI</sequence>
<gene>
    <name type="primary">EIF4A3</name>
    <name type="synonym">DDX48</name>
</gene>
<reference key="1">
    <citation type="journal article" date="2007" name="Biochem. Genet.">
        <title>Molecular cloning, mapping, and expression analysis of the EIF4A2 gene in pig.</title>
        <authorList>
            <person name="Wang H."/>
            <person name="Wang H."/>
            <person name="Zhu Z."/>
            <person name="Yang S."/>
            <person name="Li K."/>
        </authorList>
    </citation>
    <scope>NUCLEOTIDE SEQUENCE [MRNA]</scope>
</reference>
<organism>
    <name type="scientific">Sus scrofa</name>
    <name type="common">Pig</name>
    <dbReference type="NCBI Taxonomy" id="9823"/>
    <lineage>
        <taxon>Eukaryota</taxon>
        <taxon>Metazoa</taxon>
        <taxon>Chordata</taxon>
        <taxon>Craniata</taxon>
        <taxon>Vertebrata</taxon>
        <taxon>Euteleostomi</taxon>
        <taxon>Mammalia</taxon>
        <taxon>Eutheria</taxon>
        <taxon>Laurasiatheria</taxon>
        <taxon>Artiodactyla</taxon>
        <taxon>Suina</taxon>
        <taxon>Suidae</taxon>
        <taxon>Sus</taxon>
    </lineage>
</organism>